<feature type="chain" id="PRO_0000432064" description="Matrix protein">
    <location>
        <begin position="1"/>
        <end position="222"/>
    </location>
</feature>
<feature type="short sequence motif" description="PTAP/PSAP motif">
    <location>
        <begin position="46"/>
        <end position="49"/>
    </location>
</feature>
<accession>A7WNB1</accession>
<sequence length="222" mass="25703">MNKMNQLVRFVKDTVAVRKPQSEDKSYLPIPSTIGGHEVNSPFAEPTAPSLGIIQPKCKRADWLIKSHLTITTNYEIKEWETWDRAISDILDLYDGNPVFKPILLFVYYVLAYNARKIPGPSNGVRYGAYFDELTTVWHAIPELMNQEIDYSYNHRVLHRKIQYVISFKIQMSSTKRRTSPIESFIEVTSEGLKHTPQFTTILDRARFVYSLTGGRYVIHPF</sequence>
<name>MATRX_DMSVA</name>
<keyword id="KW-1043">Host membrane</keyword>
<keyword id="KW-1048">Host nucleus</keyword>
<keyword id="KW-0945">Host-virus interaction</keyword>
<keyword id="KW-0472">Membrane</keyword>
<keyword id="KW-1185">Reference proteome</keyword>
<keyword id="KW-1198">Viral budding</keyword>
<keyword id="KW-1187">Viral budding via the host ESCRT complexes</keyword>
<keyword id="KW-0468">Viral matrix protein</keyword>
<keyword id="KW-1188">Viral release from host cell</keyword>
<keyword id="KW-0946">Virion</keyword>
<protein>
    <recommendedName>
        <fullName>Matrix protein</fullName>
    </recommendedName>
</protein>
<dbReference type="EMBL" id="AM689309">
    <property type="protein sequence ID" value="CAM84586.1"/>
    <property type="molecule type" value="Genomic_RNA"/>
</dbReference>
<dbReference type="RefSeq" id="YP_003126911.1">
    <property type="nucleotide sequence ID" value="NC_013135.1"/>
</dbReference>
<dbReference type="GeneID" id="8363512"/>
<dbReference type="KEGG" id="vg:8363512"/>
<dbReference type="OrthoDB" id="26690at10239"/>
<dbReference type="Proteomes" id="UP000029768">
    <property type="component" value="Genome"/>
</dbReference>
<dbReference type="GO" id="GO:0044200">
    <property type="term" value="C:host cell nuclear membrane"/>
    <property type="evidence" value="ECO:0007669"/>
    <property type="project" value="UniProtKB-SubCell"/>
</dbReference>
<dbReference type="GO" id="GO:0016020">
    <property type="term" value="C:membrane"/>
    <property type="evidence" value="ECO:0007669"/>
    <property type="project" value="UniProtKB-KW"/>
</dbReference>
<dbReference type="GO" id="GO:0019031">
    <property type="term" value="C:viral envelope"/>
    <property type="evidence" value="ECO:0007669"/>
    <property type="project" value="InterPro"/>
</dbReference>
<dbReference type="GO" id="GO:0055036">
    <property type="term" value="C:virion membrane"/>
    <property type="evidence" value="ECO:0007669"/>
    <property type="project" value="UniProtKB-SubCell"/>
</dbReference>
<dbReference type="GO" id="GO:0039660">
    <property type="term" value="F:structural constituent of virion"/>
    <property type="evidence" value="ECO:0007669"/>
    <property type="project" value="UniProtKB-KW"/>
</dbReference>
<dbReference type="GO" id="GO:0039702">
    <property type="term" value="P:viral budding via host ESCRT complex"/>
    <property type="evidence" value="ECO:0007669"/>
    <property type="project" value="UniProtKB-KW"/>
</dbReference>
<dbReference type="InterPro" id="IPR009397">
    <property type="entry name" value="Vesiculo_matrix"/>
</dbReference>
<dbReference type="Pfam" id="PF06326">
    <property type="entry name" value="Vesiculo_matrix"/>
    <property type="match status" value="1"/>
</dbReference>
<organismHost>
    <name type="scientific">Drosophila melanogaster</name>
    <name type="common">Fruit fly</name>
    <dbReference type="NCBI Taxonomy" id="7227"/>
</organismHost>
<proteinExistence type="inferred from homology"/>
<reference key="1">
    <citation type="journal article" date="2007" name="Mol. Ecol.">
        <title>The recent spread of a vertically transmitted virus through populations of Drosophila melanogaster.</title>
        <authorList>
            <person name="Carpenter J.A."/>
            <person name="Obbard D.J."/>
            <person name="Maside X."/>
            <person name="Jiggins F.M."/>
        </authorList>
    </citation>
    <scope>NUCLEOTIDE SEQUENCE [GENOMIC RNA]</scope>
    <source>
        <strain>AP30</strain>
    </source>
</reference>
<reference key="2">
    <citation type="submission" date="2009-08" db="EMBL/GenBank/DDBJ databases">
        <authorList>
            <person name="Jiggins F.M."/>
        </authorList>
    </citation>
    <scope>NUCLEOTIDE SEQUENCE [GENOMIC RNA]</scope>
    <source>
        <strain>AP30</strain>
    </source>
</reference>
<evidence type="ECO:0000250" key="1">
    <source>
        <dbReference type="UniProtKB" id="P03519"/>
    </source>
</evidence>
<comment type="function">
    <text evidence="1">Plays a major role in assembly and budding of virion, by recruiting cellular partners of the ESCRT complexes that play a key role in releasing the budding particle from the host membrane. Condensates the ribonucleocapsid core during virus assembly.</text>
</comment>
<comment type="subunit">
    <text evidence="1">Homomultimer. Interacts with viral nucleocapsid. Interacts with host TSG101.</text>
</comment>
<comment type="subcellular location">
    <subcellularLocation>
        <location evidence="1">Virion membrane</location>
        <topology evidence="1">Peripheral membrane protein</topology>
    </subcellularLocation>
    <subcellularLocation>
        <location evidence="1">Host endomembrane system</location>
        <topology evidence="1">Peripheral membrane protein</topology>
    </subcellularLocation>
    <subcellularLocation>
        <location evidence="1">Host nucleus membrane</location>
        <topology evidence="1">Peripheral membrane protein</topology>
    </subcellularLocation>
</comment>
<comment type="domain">
    <text evidence="1">Late-budding domains (L domains) are short sequence motifs essential for viral particle budding. They recruit proteins of the host ESCRT machinery (Endosomal Sorting Complex Required for Transport) or ESCRT-associated proteins. M contains a PTAP/PSAP motif, which interacts with the UEV domain of TSG101.</text>
</comment>
<organism>
    <name type="scientific">Drosophila melanogaster sigma virus (isolate Drosophila/USA/AP30/2005)</name>
    <name type="common">DMelSV</name>
    <dbReference type="NCBI Taxonomy" id="666363"/>
    <lineage>
        <taxon>Viruses</taxon>
        <taxon>Riboviria</taxon>
        <taxon>Orthornavirae</taxon>
        <taxon>Negarnaviricota</taxon>
        <taxon>Haploviricotina</taxon>
        <taxon>Monjiviricetes</taxon>
        <taxon>Mononegavirales</taxon>
        <taxon>Rhabdoviridae</taxon>
        <taxon>Alpharhabdovirinae</taxon>
        <taxon>Sigmavirus</taxon>
        <taxon>Sigmavirus melanogaster</taxon>
    </lineage>
</organism>
<gene>
    <name type="primary">M</name>
</gene>